<evidence type="ECO:0000250" key="1">
    <source>
        <dbReference type="UniProtKB" id="C4M1P9"/>
    </source>
</evidence>
<evidence type="ECO:0000250" key="2">
    <source>
        <dbReference type="UniProtKB" id="P24309"/>
    </source>
</evidence>
<evidence type="ECO:0000250" key="3">
    <source>
        <dbReference type="UniProtKB" id="Q9UK59"/>
    </source>
</evidence>
<evidence type="ECO:0000256" key="4">
    <source>
        <dbReference type="SAM" id="MobiDB-lite"/>
    </source>
</evidence>
<evidence type="ECO:0000305" key="5"/>
<reference key="1">
    <citation type="journal article" date="2003" name="PLoS Biol.">
        <title>The genome sequence of Caenorhabditis briggsae: a platform for comparative genomics.</title>
        <authorList>
            <person name="Stein L.D."/>
            <person name="Bao Z."/>
            <person name="Blasiar D."/>
            <person name="Blumenthal T."/>
            <person name="Brent M.R."/>
            <person name="Chen N."/>
            <person name="Chinwalla A."/>
            <person name="Clarke L."/>
            <person name="Clee C."/>
            <person name="Coghlan A."/>
            <person name="Coulson A."/>
            <person name="D'Eustachio P."/>
            <person name="Fitch D.H.A."/>
            <person name="Fulton L.A."/>
            <person name="Fulton R.E."/>
            <person name="Griffiths-Jones S."/>
            <person name="Harris T.W."/>
            <person name="Hillier L.W."/>
            <person name="Kamath R."/>
            <person name="Kuwabara P.E."/>
            <person name="Mardis E.R."/>
            <person name="Marra M.A."/>
            <person name="Miner T.L."/>
            <person name="Minx P."/>
            <person name="Mullikin J.C."/>
            <person name="Plumb R.W."/>
            <person name="Rogers J."/>
            <person name="Schein J.E."/>
            <person name="Sohrmann M."/>
            <person name="Spieth J."/>
            <person name="Stajich J.E."/>
            <person name="Wei C."/>
            <person name="Willey D."/>
            <person name="Wilson R.K."/>
            <person name="Durbin R.M."/>
            <person name="Waterston R.H."/>
        </authorList>
    </citation>
    <scope>NUCLEOTIDE SEQUENCE [LARGE SCALE GENOMIC DNA]</scope>
    <source>
        <strain>AF16</strain>
    </source>
</reference>
<sequence>MSTEETVDEVPCCGSHDEAQCTIQHDLAPQPLIVEEEVNNGEKKAKIAVVGCSHGEMDAIYETMALIEEKKGYKFDLLICCGDYQAVRNHGDLPHMSIPPKYRSLQTFYKYYSGEKKAPVLTLFIGGNHEASGFLCELPNGGWVAPNIFYMGFANCIQFAGLRIAGLSGIYSHGDVEFSHYERPAFAERDVKSAYHVRNVDMFRLRQLKAANNDKLSNPIDIMLSHDWPGGIPDFGDSAWLFKKKDLFEADHKSGKLGNPALMKLIYDCRPRYYLAAHLHIKFAALVPHKGSGSERPQPTRFLSLDKPIPGRQFMQALEINVASDAKMELSYDPEWLAILKNTDLLTTADKTKIVLPDRIGSVPCVYDRKDFRPTAEEMEEITKLGDLTIKTDTFKHTAPPLKEDTSEAKNVPPSAYYRNPQSAEFCQWLGIKDLNYLLVEKSSDYVGIPFYMMPDSGETEFKSNQDEVDFGEDDFIIDRGHGSEEPEAKKSRLEEEKKKKKKKIENLKTL</sequence>
<keyword id="KW-0378">Hydrolase</keyword>
<keyword id="KW-0408">Iron</keyword>
<keyword id="KW-0464">Manganese</keyword>
<keyword id="KW-0479">Metal-binding</keyword>
<keyword id="KW-0507">mRNA processing</keyword>
<keyword id="KW-0539">Nucleus</keyword>
<keyword id="KW-1185">Reference proteome</keyword>
<keyword id="KW-0862">Zinc</keyword>
<dbReference type="EC" id="3.1.4.-" evidence="3"/>
<dbReference type="EMBL" id="HE600940">
    <property type="protein sequence ID" value="CAP31589.1"/>
    <property type="molecule type" value="Genomic_DNA"/>
</dbReference>
<dbReference type="SMR" id="Q61D44"/>
<dbReference type="FunCoup" id="Q61D44">
    <property type="interactions" value="2488"/>
</dbReference>
<dbReference type="STRING" id="6238.Q61D44"/>
<dbReference type="KEGG" id="cbr:CBG_12641"/>
<dbReference type="CTD" id="8582138"/>
<dbReference type="WormBase" id="CBG12641">
    <property type="protein sequence ID" value="CBP43942"/>
    <property type="gene ID" value="WBGene00033559"/>
    <property type="gene designation" value="Cbr-dbr-1"/>
</dbReference>
<dbReference type="eggNOG" id="KOG2863">
    <property type="taxonomic scope" value="Eukaryota"/>
</dbReference>
<dbReference type="HOGENOM" id="CLU_005893_0_0_1"/>
<dbReference type="InParanoid" id="Q61D44"/>
<dbReference type="OMA" id="VKNIDCH"/>
<dbReference type="Proteomes" id="UP000008549">
    <property type="component" value="Unassembled WGS sequence"/>
</dbReference>
<dbReference type="GO" id="GO:0005634">
    <property type="term" value="C:nucleus"/>
    <property type="evidence" value="ECO:0000250"/>
    <property type="project" value="UniProtKB"/>
</dbReference>
<dbReference type="GO" id="GO:0046872">
    <property type="term" value="F:metal ion binding"/>
    <property type="evidence" value="ECO:0007669"/>
    <property type="project" value="UniProtKB-KW"/>
</dbReference>
<dbReference type="GO" id="GO:0008419">
    <property type="term" value="F:RNA lariat debranching enzyme activity"/>
    <property type="evidence" value="ECO:0000250"/>
    <property type="project" value="UniProtKB"/>
</dbReference>
<dbReference type="GO" id="GO:0000398">
    <property type="term" value="P:mRNA splicing, via spliceosome"/>
    <property type="evidence" value="ECO:0000318"/>
    <property type="project" value="GO_Central"/>
</dbReference>
<dbReference type="GO" id="GO:0000375">
    <property type="term" value="P:RNA splicing, via transesterification reactions"/>
    <property type="evidence" value="ECO:0000250"/>
    <property type="project" value="UniProtKB"/>
</dbReference>
<dbReference type="CDD" id="cd00844">
    <property type="entry name" value="MPP_Dbr1_N"/>
    <property type="match status" value="1"/>
</dbReference>
<dbReference type="InterPro" id="IPR004843">
    <property type="entry name" value="Calcineurin-like_PHP_ApaH"/>
</dbReference>
<dbReference type="InterPro" id="IPR007708">
    <property type="entry name" value="DBR1_C"/>
</dbReference>
<dbReference type="InterPro" id="IPR041816">
    <property type="entry name" value="Dbr1_N"/>
</dbReference>
<dbReference type="InterPro" id="IPR029052">
    <property type="entry name" value="Metallo-depent_PP-like"/>
</dbReference>
<dbReference type="PANTHER" id="PTHR12849:SF0">
    <property type="entry name" value="LARIAT DEBRANCHING ENZYME"/>
    <property type="match status" value="1"/>
</dbReference>
<dbReference type="PANTHER" id="PTHR12849">
    <property type="entry name" value="RNA LARIAT DEBRANCHING ENZYME"/>
    <property type="match status" value="1"/>
</dbReference>
<dbReference type="Pfam" id="PF05011">
    <property type="entry name" value="DBR1"/>
    <property type="match status" value="1"/>
</dbReference>
<dbReference type="Pfam" id="PF00149">
    <property type="entry name" value="Metallophos"/>
    <property type="match status" value="1"/>
</dbReference>
<dbReference type="SMART" id="SM01124">
    <property type="entry name" value="DBR1"/>
    <property type="match status" value="1"/>
</dbReference>
<dbReference type="SUPFAM" id="SSF56300">
    <property type="entry name" value="Metallo-dependent phosphatases"/>
    <property type="match status" value="1"/>
</dbReference>
<organism>
    <name type="scientific">Caenorhabditis briggsae</name>
    <dbReference type="NCBI Taxonomy" id="6238"/>
    <lineage>
        <taxon>Eukaryota</taxon>
        <taxon>Metazoa</taxon>
        <taxon>Ecdysozoa</taxon>
        <taxon>Nematoda</taxon>
        <taxon>Chromadorea</taxon>
        <taxon>Rhabditida</taxon>
        <taxon>Rhabditina</taxon>
        <taxon>Rhabditomorpha</taxon>
        <taxon>Rhabditoidea</taxon>
        <taxon>Rhabditidae</taxon>
        <taxon>Peloderinae</taxon>
        <taxon>Caenorhabditis</taxon>
    </lineage>
</organism>
<protein>
    <recommendedName>
        <fullName>Lariat debranching enzyme</fullName>
        <ecNumber evidence="3">3.1.4.-</ecNumber>
    </recommendedName>
</protein>
<gene>
    <name type="primary">dbr-1</name>
    <name type="ORF">CBG12641</name>
</gene>
<accession>Q61D44</accession>
<accession>A8XG83</accession>
<name>DBR1_CAEBR</name>
<comment type="function">
    <text evidence="3">Cleaves the 2'-5' phosphodiester linkage at the branch point of lariat intron pre-mRNAs after splicing and converts them into linear molecules that are subsequently degraded. It thereby facilitates ribonucleotide turnover.</text>
</comment>
<comment type="cofactor">
    <cofactor evidence="2">
        <name>Fe(2+)</name>
        <dbReference type="ChEBI" id="CHEBI:29033"/>
    </cofactor>
    <cofactor evidence="2">
        <name>Zn(2+)</name>
        <dbReference type="ChEBI" id="CHEBI:29105"/>
    </cofactor>
    <cofactor evidence="3">
        <name>Mn(2+)</name>
        <dbReference type="ChEBI" id="CHEBI:29035"/>
    </cofactor>
    <text evidence="2">Binds 2 divalent metal cations per subunit.</text>
</comment>
<comment type="activity regulation">
    <text evidence="2">Active in presence of diverse metals including Fe(2+), Zn(2+), Mn(2+) (By similarity). Binds two metal cations in two adjacent alpha and beta metal-binding pockets (By similarity).</text>
</comment>
<comment type="subcellular location">
    <subcellularLocation>
        <location evidence="5">Nucleus</location>
    </subcellularLocation>
</comment>
<comment type="similarity">
    <text evidence="5">Belongs to the lariat debranching enzyme family.</text>
</comment>
<feature type="chain" id="PRO_0000250365" description="Lariat debranching enzyme">
    <location>
        <begin position="1"/>
        <end position="511"/>
    </location>
</feature>
<feature type="region of interest" description="Lariat recognition loop" evidence="1">
    <location>
        <begin position="168"/>
        <end position="198"/>
    </location>
</feature>
<feature type="region of interest" description="Disordered" evidence="4">
    <location>
        <begin position="473"/>
        <end position="511"/>
    </location>
</feature>
<feature type="compositionally biased region" description="Basic and acidic residues" evidence="4">
    <location>
        <begin position="477"/>
        <end position="498"/>
    </location>
</feature>
<feature type="binding site" evidence="1">
    <location>
        <position position="52"/>
    </location>
    <ligand>
        <name>a divalent metal cation</name>
        <dbReference type="ChEBI" id="CHEBI:60240"/>
        <label>1</label>
    </ligand>
</feature>
<feature type="binding site" evidence="1">
    <location>
        <position position="54"/>
    </location>
    <ligand>
        <name>a divalent metal cation</name>
        <dbReference type="ChEBI" id="CHEBI:60240"/>
        <label>1</label>
    </ligand>
</feature>
<feature type="binding site" evidence="1">
    <location>
        <position position="83"/>
    </location>
    <ligand>
        <name>a divalent metal cation</name>
        <dbReference type="ChEBI" id="CHEBI:60240"/>
        <label>2</label>
    </ligand>
</feature>
<feature type="binding site" evidence="1">
    <location>
        <position position="128"/>
    </location>
    <ligand>
        <name>a divalent metal cation</name>
        <dbReference type="ChEBI" id="CHEBI:60240"/>
        <label>2</label>
    </ligand>
</feature>
<feature type="binding site" evidence="1">
    <location>
        <position position="226"/>
    </location>
    <ligand>
        <name>a divalent metal cation</name>
        <dbReference type="ChEBI" id="CHEBI:60240"/>
        <label>2</label>
    </ligand>
</feature>
<feature type="binding site" evidence="1">
    <location>
        <position position="278"/>
    </location>
    <ligand>
        <name>a divalent metal cation</name>
        <dbReference type="ChEBI" id="CHEBI:60240"/>
        <label>2</label>
    </ligand>
</feature>
<feature type="binding site" evidence="1">
    <location>
        <position position="280"/>
    </location>
    <ligand>
        <name>a divalent metal cation</name>
        <dbReference type="ChEBI" id="CHEBI:60240"/>
        <label>1</label>
    </ligand>
</feature>
<proteinExistence type="inferred from homology"/>